<accession>Q90ZL2</accession>
<name>LANC1_DANRE</name>
<comment type="function">
    <text evidence="1 2">Functions as a glutathione transferase. Catalyzes conjugation of the glutathione (GSH) to artificial substrates 1-chloro-2,4-dinitrobenzene (CDNB) and p-nitrophenyl acetate (By similarity). Binds glutathione (By similarity).</text>
</comment>
<comment type="catalytic activity">
    <reaction evidence="2">
        <text>RX + glutathione = an S-substituted glutathione + a halide anion + H(+)</text>
        <dbReference type="Rhea" id="RHEA:16437"/>
        <dbReference type="ChEBI" id="CHEBI:15378"/>
        <dbReference type="ChEBI" id="CHEBI:16042"/>
        <dbReference type="ChEBI" id="CHEBI:17792"/>
        <dbReference type="ChEBI" id="CHEBI:57925"/>
        <dbReference type="ChEBI" id="CHEBI:90779"/>
        <dbReference type="EC" id="2.5.1.18"/>
    </reaction>
</comment>
<comment type="catalytic activity">
    <reaction evidence="2">
        <text>1-chloro-2,4-dinitrobenzene + glutathione = 2,4-dinitrophenyl-S-glutathione + chloride + H(+)</text>
        <dbReference type="Rhea" id="RHEA:51220"/>
        <dbReference type="ChEBI" id="CHEBI:15378"/>
        <dbReference type="ChEBI" id="CHEBI:17996"/>
        <dbReference type="ChEBI" id="CHEBI:34718"/>
        <dbReference type="ChEBI" id="CHEBI:57925"/>
        <dbReference type="ChEBI" id="CHEBI:133977"/>
        <dbReference type="EC" id="2.5.1.18"/>
    </reaction>
</comment>
<comment type="subcellular location">
    <subcellularLocation>
        <location evidence="1">Cytoplasm</location>
    </subcellularLocation>
    <subcellularLocation>
        <location evidence="1">Cell membrane</location>
        <topology evidence="1">Peripheral membrane protein</topology>
    </subcellularLocation>
</comment>
<comment type="similarity">
    <text evidence="3">Belongs to the LanC-like protein family.</text>
</comment>
<keyword id="KW-1003">Cell membrane</keyword>
<keyword id="KW-0963">Cytoplasm</keyword>
<keyword id="KW-0472">Membrane</keyword>
<keyword id="KW-0479">Metal-binding</keyword>
<keyword id="KW-1185">Reference proteome</keyword>
<keyword id="KW-0808">Transferase</keyword>
<keyword id="KW-0862">Zinc</keyword>
<evidence type="ECO:0000250" key="1">
    <source>
        <dbReference type="UniProtKB" id="O43813"/>
    </source>
</evidence>
<evidence type="ECO:0000250" key="2">
    <source>
        <dbReference type="UniProtKB" id="O89112"/>
    </source>
</evidence>
<evidence type="ECO:0000305" key="3"/>
<sequence>MSEQRALKNPYPDYTGLGCAQDLFDMQGNLTQHFATSISSKISELLAILENGLKNADPRDCTGYTGWAGIALLYLHLHSVFGDPTFLQRALDYVNRSLRSLTQRWVTFLCGDAGPLAIAAVVYHRLQKHQESDECLNRLLQLQPSVVQGKGRLPDELLYGRTGYLYSLIFVNQQFQQEKIPFQYIQQICDAILESGQILSQRNKIQDQSPLMYEWYQEEYVGAAHGLSGIYYYLMQPGLVAGQDRVFSLVKPSVNYVCQLKFPSGNYAPCVGDARDLLVHWCHGSPGVIYMLIQAFKVFGVRQYLEDALQCGEVIWQRGLLKKGYGLCHGAAGNAYGFLALYKITQDPKHLYRACMFADWCMNYGRHGCRTPDTPFSLFEGMAGTIYFLADLLQPARAKFPCFEV</sequence>
<gene>
    <name evidence="1" type="primary">lancl1</name>
</gene>
<organism>
    <name type="scientific">Danio rerio</name>
    <name type="common">Zebrafish</name>
    <name type="synonym">Brachydanio rerio</name>
    <dbReference type="NCBI Taxonomy" id="7955"/>
    <lineage>
        <taxon>Eukaryota</taxon>
        <taxon>Metazoa</taxon>
        <taxon>Chordata</taxon>
        <taxon>Craniata</taxon>
        <taxon>Vertebrata</taxon>
        <taxon>Euteleostomi</taxon>
        <taxon>Actinopterygii</taxon>
        <taxon>Neopterygii</taxon>
        <taxon>Teleostei</taxon>
        <taxon>Ostariophysi</taxon>
        <taxon>Cypriniformes</taxon>
        <taxon>Danionidae</taxon>
        <taxon>Danioninae</taxon>
        <taxon>Danio</taxon>
    </lineage>
</organism>
<feature type="chain" id="PRO_0000191271" description="Glutathione S-transferase LANCL1">
    <location>
        <begin position="1"/>
        <end position="405"/>
    </location>
</feature>
<feature type="binding site" evidence="1">
    <location>
        <position position="282"/>
    </location>
    <ligand>
        <name>Zn(2+)</name>
        <dbReference type="ChEBI" id="CHEBI:29105"/>
    </ligand>
</feature>
<feature type="binding site" evidence="1">
    <location>
        <position position="323"/>
    </location>
    <ligand>
        <name>glutathione</name>
        <dbReference type="ChEBI" id="CHEBI:57925"/>
    </ligand>
</feature>
<feature type="binding site" evidence="1">
    <location>
        <position position="328"/>
    </location>
    <ligand>
        <name>Zn(2+)</name>
        <dbReference type="ChEBI" id="CHEBI:29105"/>
    </ligand>
</feature>
<feature type="binding site" evidence="1">
    <location>
        <position position="329"/>
    </location>
    <ligand>
        <name>Zn(2+)</name>
        <dbReference type="ChEBI" id="CHEBI:29105"/>
    </ligand>
</feature>
<feature type="binding site" evidence="1">
    <location>
        <begin position="370"/>
        <end position="373"/>
    </location>
    <ligand>
        <name>glutathione</name>
        <dbReference type="ChEBI" id="CHEBI:57925"/>
    </ligand>
</feature>
<proteinExistence type="evidence at transcript level"/>
<dbReference type="EC" id="2.5.1.18" evidence="2"/>
<dbReference type="EMBL" id="AJ278244">
    <property type="protein sequence ID" value="CAC39613.1"/>
    <property type="molecule type" value="mRNA"/>
</dbReference>
<dbReference type="RefSeq" id="NP_001009891.1">
    <property type="nucleotide sequence ID" value="NM_001009891.2"/>
</dbReference>
<dbReference type="SMR" id="Q90ZL2"/>
<dbReference type="FunCoup" id="Q90ZL2">
    <property type="interactions" value="690"/>
</dbReference>
<dbReference type="STRING" id="7955.ENSDARP00000018694"/>
<dbReference type="PaxDb" id="7955-ENSDARP00000018694"/>
<dbReference type="Ensembl" id="ENSDART00000016139">
    <property type="protein sequence ID" value="ENSDARP00000018694"/>
    <property type="gene ID" value="ENSDARG00000013741"/>
</dbReference>
<dbReference type="GeneID" id="494154"/>
<dbReference type="KEGG" id="dre:494154"/>
<dbReference type="AGR" id="ZFIN:ZDB-GENE-040924-1"/>
<dbReference type="CTD" id="10314"/>
<dbReference type="ZFIN" id="ZDB-GENE-040924-1">
    <property type="gene designation" value="lancl1"/>
</dbReference>
<dbReference type="eggNOG" id="KOG2787">
    <property type="taxonomic scope" value="Eukaryota"/>
</dbReference>
<dbReference type="HOGENOM" id="CLU_036244_0_0_1"/>
<dbReference type="InParanoid" id="Q90ZL2"/>
<dbReference type="OMA" id="PCVDDNR"/>
<dbReference type="OrthoDB" id="10257263at2759"/>
<dbReference type="PhylomeDB" id="Q90ZL2"/>
<dbReference type="TreeFam" id="TF300068"/>
<dbReference type="PRO" id="PR:Q90ZL2"/>
<dbReference type="Proteomes" id="UP000000437">
    <property type="component" value="Chromosome 1"/>
</dbReference>
<dbReference type="Bgee" id="ENSDARG00000013741">
    <property type="expression patterns" value="Expressed in brain and 25 other cell types or tissues"/>
</dbReference>
<dbReference type="ExpressionAtlas" id="Q90ZL2">
    <property type="expression patterns" value="baseline and differential"/>
</dbReference>
<dbReference type="GO" id="GO:0005737">
    <property type="term" value="C:cytoplasm"/>
    <property type="evidence" value="ECO:0007669"/>
    <property type="project" value="UniProtKB-SubCell"/>
</dbReference>
<dbReference type="GO" id="GO:0005886">
    <property type="term" value="C:plasma membrane"/>
    <property type="evidence" value="ECO:0000318"/>
    <property type="project" value="GO_Central"/>
</dbReference>
<dbReference type="GO" id="GO:0043295">
    <property type="term" value="F:glutathione binding"/>
    <property type="evidence" value="ECO:0000250"/>
    <property type="project" value="UniProtKB"/>
</dbReference>
<dbReference type="GO" id="GO:0004364">
    <property type="term" value="F:glutathione transferase activity"/>
    <property type="evidence" value="ECO:0000250"/>
    <property type="project" value="UniProtKB"/>
</dbReference>
<dbReference type="GO" id="GO:0008270">
    <property type="term" value="F:zinc ion binding"/>
    <property type="evidence" value="ECO:0000250"/>
    <property type="project" value="UniProtKB"/>
</dbReference>
<dbReference type="GO" id="GO:0005975">
    <property type="term" value="P:carbohydrate metabolic process"/>
    <property type="evidence" value="ECO:0007669"/>
    <property type="project" value="InterPro"/>
</dbReference>
<dbReference type="GO" id="GO:0031179">
    <property type="term" value="P:peptide modification"/>
    <property type="evidence" value="ECO:0007669"/>
    <property type="project" value="InterPro"/>
</dbReference>
<dbReference type="CDD" id="cd04794">
    <property type="entry name" value="euk_LANCL"/>
    <property type="match status" value="1"/>
</dbReference>
<dbReference type="FunFam" id="1.50.10.10:FF:000019">
    <property type="entry name" value="LanC-like protein 1"/>
    <property type="match status" value="1"/>
</dbReference>
<dbReference type="Gene3D" id="1.50.10.10">
    <property type="match status" value="1"/>
</dbReference>
<dbReference type="InterPro" id="IPR012341">
    <property type="entry name" value="6hp_glycosidase-like_sf"/>
</dbReference>
<dbReference type="InterPro" id="IPR007822">
    <property type="entry name" value="LANC-like"/>
</dbReference>
<dbReference type="InterPro" id="IPR020464">
    <property type="entry name" value="LanC-like_prot_euk"/>
</dbReference>
<dbReference type="PANTHER" id="PTHR12736:SF5">
    <property type="entry name" value="GLUTATHIONE S-TRANSFERASE LANCL1"/>
    <property type="match status" value="1"/>
</dbReference>
<dbReference type="PANTHER" id="PTHR12736">
    <property type="entry name" value="LANC-LIKE PROTEIN"/>
    <property type="match status" value="1"/>
</dbReference>
<dbReference type="Pfam" id="PF05147">
    <property type="entry name" value="LANC_like"/>
    <property type="match status" value="1"/>
</dbReference>
<dbReference type="PRINTS" id="PR01951">
    <property type="entry name" value="LANCEUKARYTE"/>
</dbReference>
<dbReference type="PRINTS" id="PR01950">
    <property type="entry name" value="LANCSUPER"/>
</dbReference>
<dbReference type="SMART" id="SM01260">
    <property type="entry name" value="LANC_like"/>
    <property type="match status" value="1"/>
</dbReference>
<dbReference type="SUPFAM" id="SSF158745">
    <property type="entry name" value="LanC-like"/>
    <property type="match status" value="1"/>
</dbReference>
<reference key="1">
    <citation type="submission" date="2000-05" db="EMBL/GenBank/DDBJ databases">
        <title>Molecular cloning of zebrafish LANCL1, encoding the lantibiotic synthetase C (LanC)-like protein 1.</title>
        <authorList>
            <person name="Pongratz M."/>
            <person name="Mayer H."/>
            <person name="Prohaska R."/>
        </authorList>
    </citation>
    <scope>NUCLEOTIDE SEQUENCE [MRNA]</scope>
</reference>
<protein>
    <recommendedName>
        <fullName evidence="2">Glutathione S-transferase LANCL1</fullName>
        <ecNumber evidence="2">2.5.1.18</ecNumber>
    </recommendedName>
    <alternativeName>
        <fullName evidence="1">LanC-like protein 1</fullName>
    </alternativeName>
</protein>